<sequence>MVEATAQETDRPRFSFSIAAREGKARTGTIEMKRGVIRTPAFMPVGTAATVKALKPETVRATGADIILGNTYHLMLRPGAERIAKLGGLHSFMGWDRPILTDSGGYQVMSLSSLTKQSEEGVTFKSHLDGSRHMLSPERSIEIQHLLGSDIVMAFDECTPYPATPSRAASSMERSMRWAKRSRDAFDSRKEQAENAALFGIQQGSVFENLRQQSADALAEIGFDGYAVGGLAVGEGQDEMFRVLDFSVPMLPDDKPHYLMGVGKPDDIVGAVERGIDMFDCVLPTRSGRNGQAFTWDGPINIRNARFSEDLTPLDSECHCAVCQKWSRAYIHHLIRAGEILGAMLMTEHNIAFYQQLMQKIRDSISEGRFSQFAQDFRARYFARNS</sequence>
<comment type="function">
    <text evidence="1 10">Catalyzes the base-exchange of a guanine (G) residue with the queuine precursor 7-aminomethyl-7-deazaguanine (PreQ1) at position 34 (anticodon wobble position) in tRNAs with GU(N) anticodons (tRNA-Asp, -Asn, -His and -Tyr). Catalysis occurs through a double-displacement mechanism. The nucleophile active site attacks the C1' of nucleotide 34 to detach the guanine base from the RNA, forming a covalent enzyme-RNA intermediate. The proton acceptor active site deprotonates the incoming PreQ1, allowing a nucleophilic attack on the C1' of the ribose to form the product. After dissociation, two additional enzymatic reactions on the tRNA convert PreQ1 to queuine (Q), resulting in the hypermodified nucleoside queuosine (7-(((4,5-cis-dihydroxy-2-cyclopenten-1-yl)amino)methyl)-7-deazaguanosine).</text>
</comment>
<comment type="catalytic activity">
    <reaction evidence="1 10">
        <text>7-aminomethyl-7-carbaguanine + guanosine(34) in tRNA = 7-aminomethyl-7-carbaguanosine(34) in tRNA + guanine</text>
        <dbReference type="Rhea" id="RHEA:24104"/>
        <dbReference type="Rhea" id="RHEA-COMP:10341"/>
        <dbReference type="Rhea" id="RHEA-COMP:10342"/>
        <dbReference type="ChEBI" id="CHEBI:16235"/>
        <dbReference type="ChEBI" id="CHEBI:58703"/>
        <dbReference type="ChEBI" id="CHEBI:74269"/>
        <dbReference type="ChEBI" id="CHEBI:82833"/>
        <dbReference type="EC" id="2.4.2.29"/>
    </reaction>
</comment>
<comment type="cofactor">
    <cofactor evidence="1 2 3 4 5 6 7 8 9 11 12">
        <name>Zn(2+)</name>
        <dbReference type="ChEBI" id="CHEBI:29105"/>
    </cofactor>
    <text evidence="1 2 3 4 5 6 7 8 9 11 12">Binds 1 zinc ion per subunit.</text>
</comment>
<comment type="biophysicochemical properties">
    <kinetics>
        <KM evidence="10">0.2 uM for tRNA(Tyr)</KM>
        <KM evidence="10">0.7 uM for guanine</KM>
        <text evidence="10">kcat is 0.0022 sec(-1) with tRNA(Tyr) and guanine as substrates.</text>
    </kinetics>
</comment>
<comment type="pathway">
    <text evidence="1 15">tRNA modification; tRNA-queuosine biosynthesis.</text>
</comment>
<comment type="subunit">
    <text evidence="1 7 9">Homodimer. Within each dimer, one monomer is responsible for RNA recognition and catalysis, while the other monomer binds to the replacement base PreQ1.</text>
</comment>
<comment type="similarity">
    <text evidence="1">Belongs to the queuine tRNA-ribosyltransferase family.</text>
</comment>
<comment type="sequence caution" evidence="13">
    <conflict type="erroneous initiation">
        <sequence resource="EMBL-CDS" id="AAA27704"/>
    </conflict>
</comment>
<comment type="sequence caution" evidence="13">
    <conflict type="erroneous initiation">
        <sequence resource="EMBL-CDS" id="AAA27705"/>
    </conflict>
</comment>
<comment type="sequence caution" evidence="13">
    <conflict type="erroneous initiation">
        <sequence resource="EMBL-CDS" id="AAG29862"/>
    </conflict>
</comment>
<comment type="sequence caution" evidence="13">
    <conflict type="frameshift">
        <sequence resource="EMBL" id="Z11910"/>
    </conflict>
</comment>
<name>TGT_ZYMMO</name>
<dbReference type="EC" id="2.4.2.29" evidence="1"/>
<dbReference type="EMBL" id="L33777">
    <property type="protein sequence ID" value="AAA27704.1"/>
    <property type="status" value="ALT_INIT"/>
    <property type="molecule type" value="Genomic_DNA"/>
</dbReference>
<dbReference type="EMBL" id="L33777">
    <property type="protein sequence ID" value="AAA27705.1"/>
    <property type="status" value="ALT_INIT"/>
    <property type="molecule type" value="Genomic_DNA"/>
</dbReference>
<dbReference type="EMBL" id="AF313764">
    <property type="protein sequence ID" value="AAG29862.1"/>
    <property type="status" value="ALT_INIT"/>
    <property type="molecule type" value="Genomic_DNA"/>
</dbReference>
<dbReference type="EMBL" id="AE008692">
    <property type="protein sequence ID" value="AAV88987.2"/>
    <property type="molecule type" value="Genomic_DNA"/>
</dbReference>
<dbReference type="EMBL" id="Z11910">
    <property type="status" value="NOT_ANNOTATED_CDS"/>
    <property type="molecule type" value="Genomic_DNA"/>
</dbReference>
<dbReference type="PIR" id="T46898">
    <property type="entry name" value="T46898"/>
</dbReference>
<dbReference type="RefSeq" id="WP_023593392.1">
    <property type="nucleotide sequence ID" value="NC_022900.1"/>
</dbReference>
<dbReference type="PDB" id="1EFZ">
    <property type="method" value="X-ray"/>
    <property type="resolution" value="2.00 A"/>
    <property type="chains" value="A=1-386"/>
</dbReference>
<dbReference type="PDB" id="1ENU">
    <property type="method" value="X-ray"/>
    <property type="resolution" value="1.95 A"/>
    <property type="chains" value="A=1-386"/>
</dbReference>
<dbReference type="PDB" id="1F3E">
    <property type="method" value="X-ray"/>
    <property type="resolution" value="1.85 A"/>
    <property type="chains" value="A=1-386"/>
</dbReference>
<dbReference type="PDB" id="1K4G">
    <property type="method" value="X-ray"/>
    <property type="resolution" value="1.70 A"/>
    <property type="chains" value="A=1-386"/>
</dbReference>
<dbReference type="PDB" id="1K4H">
    <property type="method" value="X-ray"/>
    <property type="resolution" value="1.80 A"/>
    <property type="chains" value="A=1-386"/>
</dbReference>
<dbReference type="PDB" id="1N2V">
    <property type="method" value="X-ray"/>
    <property type="resolution" value="2.10 A"/>
    <property type="chains" value="A=1-386"/>
</dbReference>
<dbReference type="PDB" id="1OZM">
    <property type="method" value="X-ray"/>
    <property type="resolution" value="1.95 A"/>
    <property type="chains" value="A=2-386"/>
</dbReference>
<dbReference type="PDB" id="1OZQ">
    <property type="method" value="X-ray"/>
    <property type="resolution" value="1.90 A"/>
    <property type="chains" value="A=2-386"/>
</dbReference>
<dbReference type="PDB" id="1P0B">
    <property type="method" value="X-ray"/>
    <property type="resolution" value="1.70 A"/>
    <property type="chains" value="A=2-386"/>
</dbReference>
<dbReference type="PDB" id="1P0D">
    <property type="method" value="X-ray"/>
    <property type="resolution" value="1.90 A"/>
    <property type="chains" value="A=2-386"/>
</dbReference>
<dbReference type="PDB" id="1P0E">
    <property type="method" value="X-ray"/>
    <property type="resolution" value="2.40 A"/>
    <property type="chains" value="A=2-386"/>
</dbReference>
<dbReference type="PDB" id="1PUD">
    <property type="method" value="X-ray"/>
    <property type="resolution" value="1.85 A"/>
    <property type="chains" value="A=1-386"/>
</dbReference>
<dbReference type="PDB" id="1PXG">
    <property type="method" value="X-ray"/>
    <property type="resolution" value="1.70 A"/>
    <property type="chains" value="A=2-383"/>
</dbReference>
<dbReference type="PDB" id="1Q2R">
    <property type="method" value="X-ray"/>
    <property type="resolution" value="2.90 A"/>
    <property type="chains" value="A/B/C/D=1-386"/>
</dbReference>
<dbReference type="PDB" id="1Q2S">
    <property type="method" value="X-ray"/>
    <property type="resolution" value="3.20 A"/>
    <property type="chains" value="A/B/C/D=1-386"/>
</dbReference>
<dbReference type="PDB" id="1Q4W">
    <property type="method" value="X-ray"/>
    <property type="resolution" value="1.93 A"/>
    <property type="chains" value="A=1-386"/>
</dbReference>
<dbReference type="PDB" id="1Q63">
    <property type="method" value="X-ray"/>
    <property type="resolution" value="1.85 A"/>
    <property type="chains" value="A=1-386"/>
</dbReference>
<dbReference type="PDB" id="1Q65">
    <property type="method" value="X-ray"/>
    <property type="resolution" value="2.10 A"/>
    <property type="chains" value="A=1-386"/>
</dbReference>
<dbReference type="PDB" id="1Q66">
    <property type="method" value="X-ray"/>
    <property type="resolution" value="1.75 A"/>
    <property type="chains" value="A=1-386"/>
</dbReference>
<dbReference type="PDB" id="1R5Y">
    <property type="method" value="X-ray"/>
    <property type="resolution" value="1.20 A"/>
    <property type="chains" value="A=1-386"/>
</dbReference>
<dbReference type="PDB" id="1S38">
    <property type="method" value="X-ray"/>
    <property type="resolution" value="1.81 A"/>
    <property type="chains" value="A=1-386"/>
</dbReference>
<dbReference type="PDB" id="1S39">
    <property type="method" value="X-ray"/>
    <property type="resolution" value="1.95 A"/>
    <property type="chains" value="A=1-386"/>
</dbReference>
<dbReference type="PDB" id="1WKD">
    <property type="method" value="X-ray"/>
    <property type="resolution" value="2.60 A"/>
    <property type="chains" value="A=1-386"/>
</dbReference>
<dbReference type="PDB" id="1WKE">
    <property type="method" value="X-ray"/>
    <property type="resolution" value="2.20 A"/>
    <property type="chains" value="A=1-386"/>
</dbReference>
<dbReference type="PDB" id="1WKF">
    <property type="method" value="X-ray"/>
    <property type="resolution" value="2.20 A"/>
    <property type="chains" value="A=1-386"/>
</dbReference>
<dbReference type="PDB" id="1Y5V">
    <property type="method" value="X-ray"/>
    <property type="resolution" value="1.58 A"/>
    <property type="chains" value="A=2-386"/>
</dbReference>
<dbReference type="PDB" id="1Y5W">
    <property type="method" value="X-ray"/>
    <property type="resolution" value="1.58 A"/>
    <property type="chains" value="A=2-386"/>
</dbReference>
<dbReference type="PDB" id="1Y5X">
    <property type="method" value="X-ray"/>
    <property type="resolution" value="2.10 A"/>
    <property type="chains" value="A/D=2-386"/>
</dbReference>
<dbReference type="PDB" id="2BBF">
    <property type="method" value="X-ray"/>
    <property type="resolution" value="1.70 A"/>
    <property type="chains" value="A=1-386"/>
</dbReference>
<dbReference type="PDB" id="2NQZ">
    <property type="method" value="X-ray"/>
    <property type="resolution" value="1.46 A"/>
    <property type="chains" value="A=2-386"/>
</dbReference>
<dbReference type="PDB" id="2NSO">
    <property type="method" value="X-ray"/>
    <property type="resolution" value="1.60 A"/>
    <property type="chains" value="A=1-386"/>
</dbReference>
<dbReference type="PDB" id="2OKO">
    <property type="method" value="X-ray"/>
    <property type="resolution" value="1.50 A"/>
    <property type="chains" value="A=2-386"/>
</dbReference>
<dbReference type="PDB" id="2POT">
    <property type="method" value="X-ray"/>
    <property type="resolution" value="1.80 A"/>
    <property type="chains" value="A=1-386"/>
</dbReference>
<dbReference type="PDB" id="2PWU">
    <property type="method" value="X-ray"/>
    <property type="resolution" value="1.77 A"/>
    <property type="chains" value="A=1-386"/>
</dbReference>
<dbReference type="PDB" id="2PWV">
    <property type="method" value="X-ray"/>
    <property type="resolution" value="1.70 A"/>
    <property type="chains" value="A=1-386"/>
</dbReference>
<dbReference type="PDB" id="2QII">
    <property type="method" value="X-ray"/>
    <property type="resolution" value="1.70 A"/>
    <property type="chains" value="A=1-386"/>
</dbReference>
<dbReference type="PDB" id="2QZR">
    <property type="method" value="X-ray"/>
    <property type="resolution" value="1.95 A"/>
    <property type="chains" value="A=2-386"/>
</dbReference>
<dbReference type="PDB" id="2Z1V">
    <property type="method" value="X-ray"/>
    <property type="resolution" value="1.55 A"/>
    <property type="chains" value="A=1-386"/>
</dbReference>
<dbReference type="PDB" id="2Z1W">
    <property type="method" value="X-ray"/>
    <property type="resolution" value="1.63 A"/>
    <property type="chains" value="A=1-386"/>
</dbReference>
<dbReference type="PDB" id="2Z1X">
    <property type="method" value="X-ray"/>
    <property type="resolution" value="1.63 A"/>
    <property type="chains" value="A=1-386"/>
</dbReference>
<dbReference type="PDB" id="2Z7K">
    <property type="method" value="X-ray"/>
    <property type="resolution" value="1.28 A"/>
    <property type="chains" value="A=1-386"/>
</dbReference>
<dbReference type="PDB" id="3BL3">
    <property type="method" value="X-ray"/>
    <property type="resolution" value="2.25 A"/>
    <property type="chains" value="A=1-386"/>
</dbReference>
<dbReference type="PDB" id="3BLD">
    <property type="method" value="X-ray"/>
    <property type="resolution" value="1.19 A"/>
    <property type="chains" value="A=1-386"/>
</dbReference>
<dbReference type="PDB" id="3BLL">
    <property type="method" value="X-ray"/>
    <property type="resolution" value="1.26 A"/>
    <property type="chains" value="A=1-386"/>
</dbReference>
<dbReference type="PDB" id="3BLO">
    <property type="method" value="X-ray"/>
    <property type="resolution" value="1.60 A"/>
    <property type="chains" value="A=1-386"/>
</dbReference>
<dbReference type="PDB" id="3C2Y">
    <property type="method" value="X-ray"/>
    <property type="resolution" value="1.78 A"/>
    <property type="chains" value="A=1-386"/>
</dbReference>
<dbReference type="PDB" id="3EOS">
    <property type="method" value="X-ray"/>
    <property type="resolution" value="1.78 A"/>
    <property type="chains" value="A=1-386"/>
</dbReference>
<dbReference type="PDB" id="3EOU">
    <property type="method" value="X-ray"/>
    <property type="resolution" value="1.93 A"/>
    <property type="chains" value="A=1-386"/>
</dbReference>
<dbReference type="PDB" id="3GC4">
    <property type="method" value="X-ray"/>
    <property type="resolution" value="1.80 A"/>
    <property type="chains" value="A=1-386"/>
</dbReference>
<dbReference type="PDB" id="3GC5">
    <property type="method" value="X-ray"/>
    <property type="resolution" value="1.40 A"/>
    <property type="chains" value="A=1-386"/>
</dbReference>
<dbReference type="PDB" id="3GE7">
    <property type="method" value="X-ray"/>
    <property type="resolution" value="1.50 A"/>
    <property type="chains" value="A=1-386"/>
</dbReference>
<dbReference type="PDB" id="3HFY">
    <property type="method" value="X-ray"/>
    <property type="resolution" value="2.00 A"/>
    <property type="chains" value="A=1-386"/>
</dbReference>
<dbReference type="PDB" id="3RR4">
    <property type="method" value="X-ray"/>
    <property type="resolution" value="1.68 A"/>
    <property type="chains" value="A=1-386"/>
</dbReference>
<dbReference type="PDB" id="3S1G">
    <property type="method" value="X-ray"/>
    <property type="resolution" value="1.82 A"/>
    <property type="chains" value="A=1-386"/>
</dbReference>
<dbReference type="PDB" id="3SM0">
    <property type="method" value="X-ray"/>
    <property type="resolution" value="1.57 A"/>
    <property type="chains" value="A=1-386"/>
</dbReference>
<dbReference type="PDB" id="3TLL">
    <property type="method" value="X-ray"/>
    <property type="resolution" value="1.37 A"/>
    <property type="chains" value="A=1-386"/>
</dbReference>
<dbReference type="PDB" id="3UNT">
    <property type="method" value="X-ray"/>
    <property type="resolution" value="1.80 A"/>
    <property type="chains" value="A=1-386"/>
</dbReference>
<dbReference type="PDB" id="3UVI">
    <property type="method" value="X-ray"/>
    <property type="resolution" value="1.55 A"/>
    <property type="chains" value="A=1-386"/>
</dbReference>
<dbReference type="PDB" id="4DXX">
    <property type="method" value="X-ray"/>
    <property type="resolution" value="1.66 A"/>
    <property type="chains" value="A=1-386"/>
</dbReference>
<dbReference type="PDB" id="4DY1">
    <property type="method" value="X-ray"/>
    <property type="resolution" value="2.04 A"/>
    <property type="chains" value="A=1-386"/>
</dbReference>
<dbReference type="PDB" id="4E2V">
    <property type="method" value="X-ray"/>
    <property type="resolution" value="1.18 A"/>
    <property type="chains" value="A=1-386"/>
</dbReference>
<dbReference type="PDB" id="4FPS">
    <property type="method" value="X-ray"/>
    <property type="resolution" value="1.45 A"/>
    <property type="chains" value="A=1-386"/>
</dbReference>
<dbReference type="PDB" id="4FR1">
    <property type="method" value="X-ray"/>
    <property type="resolution" value="1.74 A"/>
    <property type="chains" value="A=1-386"/>
</dbReference>
<dbReference type="PDB" id="4FR6">
    <property type="method" value="X-ray"/>
    <property type="resolution" value="1.59 A"/>
    <property type="chains" value="A=1-386"/>
</dbReference>
<dbReference type="PDB" id="4FSA">
    <property type="method" value="X-ray"/>
    <property type="resolution" value="1.62 A"/>
    <property type="chains" value="A=1-386"/>
</dbReference>
<dbReference type="PDB" id="4GCX">
    <property type="method" value="X-ray"/>
    <property type="resolution" value="1.42 A"/>
    <property type="chains" value="A=1-386"/>
</dbReference>
<dbReference type="PDB" id="4GD0">
    <property type="method" value="X-ray"/>
    <property type="resolution" value="1.29 A"/>
    <property type="chains" value="A=1-386"/>
</dbReference>
<dbReference type="PDB" id="4GG9">
    <property type="method" value="X-ray"/>
    <property type="resolution" value="1.48 A"/>
    <property type="chains" value="A=1-386"/>
</dbReference>
<dbReference type="PDB" id="4GH1">
    <property type="method" value="X-ray"/>
    <property type="resolution" value="1.45 A"/>
    <property type="chains" value="A=1-386"/>
</dbReference>
<dbReference type="PDB" id="4GH3">
    <property type="method" value="X-ray"/>
    <property type="resolution" value="2.06 A"/>
    <property type="chains" value="A=1-386"/>
</dbReference>
<dbReference type="PDB" id="4GHR">
    <property type="method" value="X-ray"/>
    <property type="resolution" value="2.00 A"/>
    <property type="chains" value="A=1-386"/>
</dbReference>
<dbReference type="PDB" id="4GI4">
    <property type="method" value="X-ray"/>
    <property type="resolution" value="1.97 A"/>
    <property type="chains" value="A=1-386"/>
</dbReference>
<dbReference type="PDB" id="4GIY">
    <property type="method" value="X-ray"/>
    <property type="resolution" value="1.75 A"/>
    <property type="chains" value="A=1-386"/>
</dbReference>
<dbReference type="PDB" id="4GKT">
    <property type="method" value="X-ray"/>
    <property type="resolution" value="1.53 A"/>
    <property type="chains" value="A=1-386"/>
</dbReference>
<dbReference type="PDB" id="4H6E">
    <property type="method" value="X-ray"/>
    <property type="resolution" value="1.42 A"/>
    <property type="chains" value="A=1-386"/>
</dbReference>
<dbReference type="PDB" id="4H7Z">
    <property type="method" value="X-ray"/>
    <property type="resolution" value="1.68 A"/>
    <property type="chains" value="A=1-386"/>
</dbReference>
<dbReference type="PDB" id="4HQV">
    <property type="method" value="X-ray"/>
    <property type="resolution" value="1.66 A"/>
    <property type="chains" value="A=2-386"/>
</dbReference>
<dbReference type="PDB" id="4HSH">
    <property type="method" value="X-ray"/>
    <property type="resolution" value="1.56 A"/>
    <property type="chains" value="A=2-386"/>
</dbReference>
<dbReference type="PDB" id="4HTB">
    <property type="method" value="X-ray"/>
    <property type="resolution" value="1.90 A"/>
    <property type="chains" value="A=1-386"/>
</dbReference>
<dbReference type="PDB" id="4HVX">
    <property type="method" value="X-ray"/>
    <property type="resolution" value="1.82 A"/>
    <property type="chains" value="A=1-386"/>
</dbReference>
<dbReference type="PDB" id="4IPP">
    <property type="method" value="X-ray"/>
    <property type="resolution" value="1.33 A"/>
    <property type="chains" value="A=1-386"/>
</dbReference>
<dbReference type="PDB" id="4JBR">
    <property type="method" value="X-ray"/>
    <property type="resolution" value="2.92 A"/>
    <property type="chains" value="A=1-386"/>
</dbReference>
<dbReference type="PDB" id="4KWO">
    <property type="method" value="X-ray"/>
    <property type="resolution" value="1.32 A"/>
    <property type="chains" value="A=1-386"/>
</dbReference>
<dbReference type="PDB" id="4L56">
    <property type="method" value="X-ray"/>
    <property type="resolution" value="1.70 A"/>
    <property type="chains" value="A=1-386"/>
</dbReference>
<dbReference type="PDB" id="4LBU">
    <property type="method" value="X-ray"/>
    <property type="resolution" value="1.17 A"/>
    <property type="chains" value="A=1-386"/>
</dbReference>
<dbReference type="PDB" id="4LEQ">
    <property type="method" value="X-ray"/>
    <property type="resolution" value="1.40 A"/>
    <property type="chains" value="A=1-386"/>
</dbReference>
<dbReference type="PDB" id="4PUJ">
    <property type="method" value="X-ray"/>
    <property type="resolution" value="1.42 A"/>
    <property type="chains" value="A=1-386"/>
</dbReference>
<dbReference type="PDB" id="4PUK">
    <property type="method" value="X-ray"/>
    <property type="resolution" value="1.49 A"/>
    <property type="chains" value="A=1-386"/>
</dbReference>
<dbReference type="PDB" id="4PUL">
    <property type="method" value="X-ray"/>
    <property type="resolution" value="1.65 A"/>
    <property type="chains" value="A=1-386"/>
</dbReference>
<dbReference type="PDB" id="4PUM">
    <property type="method" value="X-ray"/>
    <property type="resolution" value="1.93 A"/>
    <property type="chains" value="A=1-386"/>
</dbReference>
<dbReference type="PDB" id="4PUN">
    <property type="method" value="X-ray"/>
    <property type="resolution" value="1.25 A"/>
    <property type="chains" value="A=1-386"/>
</dbReference>
<dbReference type="PDB" id="4Q4M">
    <property type="method" value="X-ray"/>
    <property type="resolution" value="1.62 A"/>
    <property type="chains" value="A=1-386"/>
</dbReference>
<dbReference type="PDB" id="4Q4O">
    <property type="method" value="X-ray"/>
    <property type="resolution" value="1.35 A"/>
    <property type="chains" value="A=1-386"/>
</dbReference>
<dbReference type="PDB" id="4Q4P">
    <property type="method" value="X-ray"/>
    <property type="resolution" value="1.54 A"/>
    <property type="chains" value="A=1-386"/>
</dbReference>
<dbReference type="PDB" id="4Q4Q">
    <property type="method" value="X-ray"/>
    <property type="resolution" value="1.41 A"/>
    <property type="chains" value="A=1-386"/>
</dbReference>
<dbReference type="PDB" id="4Q4R">
    <property type="method" value="X-ray"/>
    <property type="resolution" value="1.45 A"/>
    <property type="chains" value="A=1-386"/>
</dbReference>
<dbReference type="PDB" id="4Q4S">
    <property type="method" value="X-ray"/>
    <property type="resolution" value="1.25 A"/>
    <property type="chains" value="A=1-386"/>
</dbReference>
<dbReference type="PDB" id="4Q8M">
    <property type="method" value="X-ray"/>
    <property type="resolution" value="1.24 A"/>
    <property type="chains" value="A=1-386"/>
</dbReference>
<dbReference type="PDB" id="4Q8N">
    <property type="method" value="X-ray"/>
    <property type="resolution" value="1.45 A"/>
    <property type="chains" value="A=1-386"/>
</dbReference>
<dbReference type="PDB" id="4Q8O">
    <property type="method" value="X-ray"/>
    <property type="resolution" value="1.89 A"/>
    <property type="chains" value="A=1-386"/>
</dbReference>
<dbReference type="PDB" id="4Q8P">
    <property type="method" value="X-ray"/>
    <property type="resolution" value="1.45 A"/>
    <property type="chains" value="A=1-386"/>
</dbReference>
<dbReference type="PDB" id="4Q8Q">
    <property type="method" value="X-ray"/>
    <property type="resolution" value="1.72 A"/>
    <property type="chains" value="A=1-386"/>
</dbReference>
<dbReference type="PDB" id="4Q8T">
    <property type="method" value="X-ray"/>
    <property type="resolution" value="1.40 A"/>
    <property type="chains" value="A=1-386"/>
</dbReference>
<dbReference type="PDB" id="4Q8U">
    <property type="method" value="X-ray"/>
    <property type="resolution" value="1.31 A"/>
    <property type="chains" value="A=1-386"/>
</dbReference>
<dbReference type="PDB" id="4Q8V">
    <property type="method" value="X-ray"/>
    <property type="resolution" value="1.40 A"/>
    <property type="chains" value="A=1-386"/>
</dbReference>
<dbReference type="PDB" id="4Q8W">
    <property type="method" value="X-ray"/>
    <property type="resolution" value="1.14 A"/>
    <property type="chains" value="A=1-386"/>
</dbReference>
<dbReference type="PDB" id="5EGR">
    <property type="method" value="X-ray"/>
    <property type="resolution" value="1.55 A"/>
    <property type="chains" value="A=1-386"/>
</dbReference>
<dbReference type="PDB" id="5I00">
    <property type="method" value="X-ray"/>
    <property type="resolution" value="1.49 A"/>
    <property type="chains" value="A=1-385"/>
</dbReference>
<dbReference type="PDB" id="5I02">
    <property type="method" value="X-ray"/>
    <property type="resolution" value="1.25 A"/>
    <property type="chains" value="A=1-385"/>
</dbReference>
<dbReference type="PDB" id="5I03">
    <property type="method" value="X-ray"/>
    <property type="resolution" value="1.73 A"/>
    <property type="chains" value="A=1-386"/>
</dbReference>
<dbReference type="PDB" id="5I06">
    <property type="method" value="X-ray"/>
    <property type="resolution" value="1.36 A"/>
    <property type="chains" value="A=1-386"/>
</dbReference>
<dbReference type="PDB" id="5I07">
    <property type="method" value="X-ray"/>
    <property type="resolution" value="1.89 A"/>
    <property type="chains" value="A/B=1-386"/>
</dbReference>
<dbReference type="PDB" id="5I09">
    <property type="method" value="X-ray"/>
    <property type="resolution" value="1.44 A"/>
    <property type="chains" value="A=1-386"/>
</dbReference>
<dbReference type="PDB" id="5J9M">
    <property type="method" value="X-ray"/>
    <property type="resolution" value="1.33 A"/>
    <property type="chains" value="A=1-386"/>
</dbReference>
<dbReference type="PDB" id="5J9N">
    <property type="method" value="X-ray"/>
    <property type="resolution" value="1.64 A"/>
    <property type="chains" value="A=1-386"/>
</dbReference>
<dbReference type="PDB" id="5J9O">
    <property type="method" value="X-ray"/>
    <property type="resolution" value="1.41 A"/>
    <property type="chains" value="A=1-386"/>
</dbReference>
<dbReference type="PDB" id="5JGM">
    <property type="method" value="X-ray"/>
    <property type="resolution" value="1.38 A"/>
    <property type="chains" value="A=1-386"/>
</dbReference>
<dbReference type="PDB" id="5JGO">
    <property type="method" value="X-ray"/>
    <property type="resolution" value="1.37 A"/>
    <property type="chains" value="A=1-386"/>
</dbReference>
<dbReference type="PDB" id="5JSV">
    <property type="method" value="X-ray"/>
    <property type="resolution" value="1.17 A"/>
    <property type="chains" value="A=1-386"/>
</dbReference>
<dbReference type="PDB" id="5JSW">
    <property type="method" value="X-ray"/>
    <property type="resolution" value="1.22 A"/>
    <property type="chains" value="A=1-386"/>
</dbReference>
<dbReference type="PDB" id="5JT5">
    <property type="method" value="X-ray"/>
    <property type="resolution" value="1.21 A"/>
    <property type="chains" value="A=1-386"/>
</dbReference>
<dbReference type="PDB" id="5JT6">
    <property type="method" value="X-ray"/>
    <property type="resolution" value="1.54 A"/>
    <property type="chains" value="A=1-386"/>
</dbReference>
<dbReference type="PDB" id="5JT7">
    <property type="method" value="X-ray"/>
    <property type="resolution" value="1.70 A"/>
    <property type="chains" value="A=1-386"/>
</dbReference>
<dbReference type="PDB" id="5JXQ">
    <property type="method" value="X-ray"/>
    <property type="resolution" value="1.20 A"/>
    <property type="chains" value="A=1-386"/>
</dbReference>
<dbReference type="PDB" id="5LPO">
    <property type="method" value="X-ray"/>
    <property type="resolution" value="1.42 A"/>
    <property type="chains" value="A=1-386"/>
</dbReference>
<dbReference type="PDB" id="5LPP">
    <property type="method" value="X-ray"/>
    <property type="resolution" value="1.99 A"/>
    <property type="chains" value="A=1-386"/>
</dbReference>
<dbReference type="PDB" id="5LPQ">
    <property type="method" value="X-ray"/>
    <property type="resolution" value="2.52 A"/>
    <property type="chains" value="A/B=1-386"/>
</dbReference>
<dbReference type="PDB" id="5LPS">
    <property type="method" value="X-ray"/>
    <property type="resolution" value="1.27 A"/>
    <property type="chains" value="A=1-386"/>
</dbReference>
<dbReference type="PDB" id="5LPT">
    <property type="method" value="X-ray"/>
    <property type="resolution" value="2.36 A"/>
    <property type="chains" value="A/B=1-386"/>
</dbReference>
<dbReference type="PDB" id="5N6F">
    <property type="method" value="X-ray"/>
    <property type="resolution" value="1.12 A"/>
    <property type="chains" value="A=10-384"/>
</dbReference>
<dbReference type="PDB" id="5SW3">
    <property type="method" value="X-ray"/>
    <property type="resolution" value="1.38 A"/>
    <property type="chains" value="A=10-384"/>
</dbReference>
<dbReference type="PDB" id="5UTI">
    <property type="method" value="X-ray"/>
    <property type="resolution" value="1.36 A"/>
    <property type="chains" value="A=10-384"/>
</dbReference>
<dbReference type="PDB" id="5UTJ">
    <property type="method" value="X-ray"/>
    <property type="resolution" value="1.55 A"/>
    <property type="chains" value="A=10-384"/>
</dbReference>
<dbReference type="PDB" id="5V3C">
    <property type="method" value="X-ray"/>
    <property type="resolution" value="1.42 A"/>
    <property type="chains" value="A=10-384"/>
</dbReference>
<dbReference type="PDB" id="6FMN">
    <property type="method" value="X-ray"/>
    <property type="resolution" value="1.36 A"/>
    <property type="chains" value="A=1-386"/>
</dbReference>
<dbReference type="PDB" id="6FPU">
    <property type="method" value="X-ray"/>
    <property type="resolution" value="1.36 A"/>
    <property type="chains" value="A=1-386"/>
</dbReference>
<dbReference type="PDB" id="6FSO">
    <property type="method" value="X-ray"/>
    <property type="resolution" value="1.45 A"/>
    <property type="chains" value="A=10-384"/>
</dbReference>
<dbReference type="PDB" id="6H7C">
    <property type="method" value="X-ray"/>
    <property type="resolution" value="1.68 A"/>
    <property type="chains" value="A=1-386"/>
</dbReference>
<dbReference type="PDB" id="6RKQ">
    <property type="method" value="X-ray"/>
    <property type="resolution" value="1.67 A"/>
    <property type="chains" value="A=10-384"/>
</dbReference>
<dbReference type="PDB" id="6RKT">
    <property type="method" value="X-ray"/>
    <property type="resolution" value="1.75 A"/>
    <property type="chains" value="A=10-384"/>
</dbReference>
<dbReference type="PDB" id="6YFW">
    <property type="method" value="X-ray"/>
    <property type="resolution" value="1.26 A"/>
    <property type="chains" value="A=1-386"/>
</dbReference>
<dbReference type="PDB" id="6YFX">
    <property type="method" value="X-ray"/>
    <property type="resolution" value="1.38 A"/>
    <property type="chains" value="A=1-386"/>
</dbReference>
<dbReference type="PDB" id="6YGK">
    <property type="method" value="X-ray"/>
    <property type="resolution" value="1.40 A"/>
    <property type="chains" value="A=1-386"/>
</dbReference>
<dbReference type="PDB" id="6YGL">
    <property type="method" value="X-ray"/>
    <property type="resolution" value="1.48 A"/>
    <property type="chains" value="A=1-386"/>
</dbReference>
<dbReference type="PDB" id="6YGM">
    <property type="method" value="X-ray"/>
    <property type="resolution" value="1.23 A"/>
    <property type="chains" value="A=1-386"/>
</dbReference>
<dbReference type="PDB" id="6YGO">
    <property type="method" value="X-ray"/>
    <property type="resolution" value="1.26 A"/>
    <property type="chains" value="A=1-386"/>
</dbReference>
<dbReference type="PDB" id="6YGP">
    <property type="method" value="X-ray"/>
    <property type="resolution" value="1.33 A"/>
    <property type="chains" value="A=1-386"/>
</dbReference>
<dbReference type="PDB" id="6YGR">
    <property type="method" value="X-ray"/>
    <property type="resolution" value="1.70 A"/>
    <property type="chains" value="A=1-386"/>
</dbReference>
<dbReference type="PDB" id="6YGS">
    <property type="method" value="X-ray"/>
    <property type="resolution" value="1.40 A"/>
    <property type="chains" value="A=1-386"/>
</dbReference>
<dbReference type="PDB" id="6YGV">
    <property type="method" value="X-ray"/>
    <property type="resolution" value="1.63 A"/>
    <property type="chains" value="A=1-386"/>
</dbReference>
<dbReference type="PDB" id="6YGW">
    <property type="method" value="X-ray"/>
    <property type="resolution" value="1.16 A"/>
    <property type="chains" value="A=1-386"/>
</dbReference>
<dbReference type="PDB" id="6YGX">
    <property type="method" value="X-ray"/>
    <property type="resolution" value="1.35 A"/>
    <property type="chains" value="A=1-386"/>
</dbReference>
<dbReference type="PDB" id="6YGY">
    <property type="method" value="X-ray"/>
    <property type="resolution" value="1.52 A"/>
    <property type="chains" value="A=1-386"/>
</dbReference>
<dbReference type="PDB" id="6YGZ">
    <property type="method" value="X-ray"/>
    <property type="resolution" value="1.86 A"/>
    <property type="chains" value="A=1-386"/>
</dbReference>
<dbReference type="PDB" id="6YH1">
    <property type="method" value="X-ray"/>
    <property type="resolution" value="1.55 A"/>
    <property type="chains" value="A=1-386"/>
</dbReference>
<dbReference type="PDB" id="6YH2">
    <property type="method" value="X-ray"/>
    <property type="resolution" value="1.19 A"/>
    <property type="chains" value="A=1-386"/>
</dbReference>
<dbReference type="PDB" id="6YH3">
    <property type="method" value="X-ray"/>
    <property type="resolution" value="1.49 A"/>
    <property type="chains" value="A=1-386"/>
</dbReference>
<dbReference type="PDB" id="6YHD">
    <property type="method" value="X-ray"/>
    <property type="resolution" value="1.25 A"/>
    <property type="chains" value="A=1-386"/>
</dbReference>
<dbReference type="PDB" id="6YHE">
    <property type="method" value="X-ray"/>
    <property type="resolution" value="1.54 A"/>
    <property type="chains" value="A=1-386"/>
</dbReference>
<dbReference type="PDB" id="6YIQ">
    <property type="method" value="X-ray"/>
    <property type="resolution" value="1.58 A"/>
    <property type="chains" value="A/B=1-386"/>
</dbReference>
<dbReference type="PDB" id="6YRY">
    <property type="method" value="X-ray"/>
    <property type="resolution" value="1.82 A"/>
    <property type="chains" value="A=1-386"/>
</dbReference>
<dbReference type="PDB" id="6YYZ">
    <property type="method" value="X-ray"/>
    <property type="resolution" value="1.21 A"/>
    <property type="chains" value="A=1-386"/>
</dbReference>
<dbReference type="PDB" id="6Z0D">
    <property type="method" value="X-ray"/>
    <property type="resolution" value="1.65 A"/>
    <property type="chains" value="A=1-386"/>
</dbReference>
<dbReference type="PDB" id="7A0B">
    <property type="method" value="X-ray"/>
    <property type="resolution" value="1.77 A"/>
    <property type="chains" value="A=1-386"/>
</dbReference>
<dbReference type="PDB" id="7A3V">
    <property type="method" value="X-ray"/>
    <property type="resolution" value="1.70 A"/>
    <property type="chains" value="A=1-386"/>
</dbReference>
<dbReference type="PDB" id="7A3X">
    <property type="method" value="X-ray"/>
    <property type="resolution" value="1.85 A"/>
    <property type="chains" value="A=1-386"/>
</dbReference>
<dbReference type="PDB" id="7A4K">
    <property type="method" value="X-ray"/>
    <property type="resolution" value="1.68 A"/>
    <property type="chains" value="A=1-386"/>
</dbReference>
<dbReference type="PDB" id="7A4X">
    <property type="method" value="X-ray"/>
    <property type="resolution" value="2.05 A"/>
    <property type="chains" value="A=1-386"/>
</dbReference>
<dbReference type="PDB" id="7A6D">
    <property type="method" value="X-ray"/>
    <property type="resolution" value="1.59 A"/>
    <property type="chains" value="A=1-386"/>
</dbReference>
<dbReference type="PDB" id="7A9E">
    <property type="method" value="X-ray"/>
    <property type="resolution" value="1.76 A"/>
    <property type="chains" value="A=1-386"/>
</dbReference>
<dbReference type="PDB" id="7ADN">
    <property type="method" value="X-ray"/>
    <property type="resolution" value="1.92 A"/>
    <property type="chains" value="A=1-386"/>
</dbReference>
<dbReference type="PDB" id="7APL">
    <property type="method" value="X-ray"/>
    <property type="resolution" value="1.99 A"/>
    <property type="chains" value="A=1-386"/>
</dbReference>
<dbReference type="PDB" id="7APM">
    <property type="method" value="X-ray"/>
    <property type="resolution" value="1.66 A"/>
    <property type="chains" value="A=1-386"/>
</dbReference>
<dbReference type="PDBsum" id="1EFZ"/>
<dbReference type="PDBsum" id="1ENU"/>
<dbReference type="PDBsum" id="1F3E"/>
<dbReference type="PDBsum" id="1K4G"/>
<dbReference type="PDBsum" id="1K4H"/>
<dbReference type="PDBsum" id="1N2V"/>
<dbReference type="PDBsum" id="1OZM"/>
<dbReference type="PDBsum" id="1OZQ"/>
<dbReference type="PDBsum" id="1P0B"/>
<dbReference type="PDBsum" id="1P0D"/>
<dbReference type="PDBsum" id="1P0E"/>
<dbReference type="PDBsum" id="1PUD"/>
<dbReference type="PDBsum" id="1PXG"/>
<dbReference type="PDBsum" id="1Q2R"/>
<dbReference type="PDBsum" id="1Q2S"/>
<dbReference type="PDBsum" id="1Q4W"/>
<dbReference type="PDBsum" id="1Q63"/>
<dbReference type="PDBsum" id="1Q65"/>
<dbReference type="PDBsum" id="1Q66"/>
<dbReference type="PDBsum" id="1R5Y"/>
<dbReference type="PDBsum" id="1S38"/>
<dbReference type="PDBsum" id="1S39"/>
<dbReference type="PDBsum" id="1WKD"/>
<dbReference type="PDBsum" id="1WKE"/>
<dbReference type="PDBsum" id="1WKF"/>
<dbReference type="PDBsum" id="1Y5V"/>
<dbReference type="PDBsum" id="1Y5W"/>
<dbReference type="PDBsum" id="1Y5X"/>
<dbReference type="PDBsum" id="2BBF"/>
<dbReference type="PDBsum" id="2NQZ"/>
<dbReference type="PDBsum" id="2NSO"/>
<dbReference type="PDBsum" id="2OKO"/>
<dbReference type="PDBsum" id="2POT"/>
<dbReference type="PDBsum" id="2PWU"/>
<dbReference type="PDBsum" id="2PWV"/>
<dbReference type="PDBsum" id="2QII"/>
<dbReference type="PDBsum" id="2QZR"/>
<dbReference type="PDBsum" id="2Z1V"/>
<dbReference type="PDBsum" id="2Z1W"/>
<dbReference type="PDBsum" id="2Z1X"/>
<dbReference type="PDBsum" id="2Z7K"/>
<dbReference type="PDBsum" id="3BL3"/>
<dbReference type="PDBsum" id="3BLD"/>
<dbReference type="PDBsum" id="3BLL"/>
<dbReference type="PDBsum" id="3BLO"/>
<dbReference type="PDBsum" id="3C2Y"/>
<dbReference type="PDBsum" id="3EOS"/>
<dbReference type="PDBsum" id="3EOU"/>
<dbReference type="PDBsum" id="3GC4"/>
<dbReference type="PDBsum" id="3GC5"/>
<dbReference type="PDBsum" id="3GE7"/>
<dbReference type="PDBsum" id="3HFY"/>
<dbReference type="PDBsum" id="3RR4"/>
<dbReference type="PDBsum" id="3S1G"/>
<dbReference type="PDBsum" id="3SM0"/>
<dbReference type="PDBsum" id="3TLL"/>
<dbReference type="PDBsum" id="3UNT"/>
<dbReference type="PDBsum" id="3UVI"/>
<dbReference type="PDBsum" id="4DXX"/>
<dbReference type="PDBsum" id="4DY1"/>
<dbReference type="PDBsum" id="4E2V"/>
<dbReference type="PDBsum" id="4FPS"/>
<dbReference type="PDBsum" id="4FR1"/>
<dbReference type="PDBsum" id="4FR6"/>
<dbReference type="PDBsum" id="4FSA"/>
<dbReference type="PDBsum" id="4GCX"/>
<dbReference type="PDBsum" id="4GD0"/>
<dbReference type="PDBsum" id="4GG9"/>
<dbReference type="PDBsum" id="4GH1"/>
<dbReference type="PDBsum" id="4GH3"/>
<dbReference type="PDBsum" id="4GHR"/>
<dbReference type="PDBsum" id="4GI4"/>
<dbReference type="PDBsum" id="4GIY"/>
<dbReference type="PDBsum" id="4GKT"/>
<dbReference type="PDBsum" id="4H6E"/>
<dbReference type="PDBsum" id="4H7Z"/>
<dbReference type="PDBsum" id="4HQV"/>
<dbReference type="PDBsum" id="4HSH"/>
<dbReference type="PDBsum" id="4HTB"/>
<dbReference type="PDBsum" id="4HVX"/>
<dbReference type="PDBsum" id="4IPP"/>
<dbReference type="PDBsum" id="4JBR"/>
<dbReference type="PDBsum" id="4KWO"/>
<dbReference type="PDBsum" id="4L56"/>
<dbReference type="PDBsum" id="4LBU"/>
<dbReference type="PDBsum" id="4LEQ"/>
<dbReference type="PDBsum" id="4PUJ"/>
<dbReference type="PDBsum" id="4PUK"/>
<dbReference type="PDBsum" id="4PUL"/>
<dbReference type="PDBsum" id="4PUM"/>
<dbReference type="PDBsum" id="4PUN"/>
<dbReference type="PDBsum" id="4Q4M"/>
<dbReference type="PDBsum" id="4Q4O"/>
<dbReference type="PDBsum" id="4Q4P"/>
<dbReference type="PDBsum" id="4Q4Q"/>
<dbReference type="PDBsum" id="4Q4R"/>
<dbReference type="PDBsum" id="4Q4S"/>
<dbReference type="PDBsum" id="4Q8M"/>
<dbReference type="PDBsum" id="4Q8N"/>
<dbReference type="PDBsum" id="4Q8O"/>
<dbReference type="PDBsum" id="4Q8P"/>
<dbReference type="PDBsum" id="4Q8Q"/>
<dbReference type="PDBsum" id="4Q8T"/>
<dbReference type="PDBsum" id="4Q8U"/>
<dbReference type="PDBsum" id="4Q8V"/>
<dbReference type="PDBsum" id="4Q8W"/>
<dbReference type="PDBsum" id="5EGR"/>
<dbReference type="PDBsum" id="5I00"/>
<dbReference type="PDBsum" id="5I02"/>
<dbReference type="PDBsum" id="5I03"/>
<dbReference type="PDBsum" id="5I06"/>
<dbReference type="PDBsum" id="5I07"/>
<dbReference type="PDBsum" id="5I09"/>
<dbReference type="PDBsum" id="5J9M"/>
<dbReference type="PDBsum" id="5J9N"/>
<dbReference type="PDBsum" id="5J9O"/>
<dbReference type="PDBsum" id="5JGM"/>
<dbReference type="PDBsum" id="5JGO"/>
<dbReference type="PDBsum" id="5JSV"/>
<dbReference type="PDBsum" id="5JSW"/>
<dbReference type="PDBsum" id="5JT5"/>
<dbReference type="PDBsum" id="5JT6"/>
<dbReference type="PDBsum" id="5JT7"/>
<dbReference type="PDBsum" id="5JXQ"/>
<dbReference type="PDBsum" id="5LPO"/>
<dbReference type="PDBsum" id="5LPP"/>
<dbReference type="PDBsum" id="5LPQ"/>
<dbReference type="PDBsum" id="5LPS"/>
<dbReference type="PDBsum" id="5LPT"/>
<dbReference type="PDBsum" id="5N6F"/>
<dbReference type="PDBsum" id="5SW3"/>
<dbReference type="PDBsum" id="5UTI"/>
<dbReference type="PDBsum" id="5UTJ"/>
<dbReference type="PDBsum" id="5V3C"/>
<dbReference type="PDBsum" id="6FMN"/>
<dbReference type="PDBsum" id="6FPU"/>
<dbReference type="PDBsum" id="6FSO"/>
<dbReference type="PDBsum" id="6H7C"/>
<dbReference type="PDBsum" id="6RKQ"/>
<dbReference type="PDBsum" id="6RKT"/>
<dbReference type="PDBsum" id="6YFW"/>
<dbReference type="PDBsum" id="6YFX"/>
<dbReference type="PDBsum" id="6YGK"/>
<dbReference type="PDBsum" id="6YGL"/>
<dbReference type="PDBsum" id="6YGM"/>
<dbReference type="PDBsum" id="6YGO"/>
<dbReference type="PDBsum" id="6YGP"/>
<dbReference type="PDBsum" id="6YGR"/>
<dbReference type="PDBsum" id="6YGS"/>
<dbReference type="PDBsum" id="6YGV"/>
<dbReference type="PDBsum" id="6YGW"/>
<dbReference type="PDBsum" id="6YGX"/>
<dbReference type="PDBsum" id="6YGY"/>
<dbReference type="PDBsum" id="6YGZ"/>
<dbReference type="PDBsum" id="6YH1"/>
<dbReference type="PDBsum" id="6YH2"/>
<dbReference type="PDBsum" id="6YH3"/>
<dbReference type="PDBsum" id="6YHD"/>
<dbReference type="PDBsum" id="6YHE"/>
<dbReference type="PDBsum" id="6YIQ"/>
<dbReference type="PDBsum" id="6YRY"/>
<dbReference type="PDBsum" id="6YYZ"/>
<dbReference type="PDBsum" id="6Z0D"/>
<dbReference type="PDBsum" id="7A0B"/>
<dbReference type="PDBsum" id="7A3V"/>
<dbReference type="PDBsum" id="7A3X"/>
<dbReference type="PDBsum" id="7A4K"/>
<dbReference type="PDBsum" id="7A4X"/>
<dbReference type="PDBsum" id="7A6D"/>
<dbReference type="PDBsum" id="7A9E"/>
<dbReference type="PDBsum" id="7ADN"/>
<dbReference type="PDBsum" id="7APL"/>
<dbReference type="PDBsum" id="7APM"/>
<dbReference type="SMR" id="P28720"/>
<dbReference type="STRING" id="264203.ZMO0363"/>
<dbReference type="BindingDB" id="P28720"/>
<dbReference type="ChEMBL" id="CHEMBL2987"/>
<dbReference type="DrugBank" id="DB07452">
    <property type="generic name" value="2,6-diamino-1,7-dihydro-8H-imidazo[4,5-g]quinazolin-8-one"/>
</dbReference>
<dbReference type="DrugBank" id="DB04543">
    <property type="generic name" value="2,6-Diamino-8-(1h-Imidazol-2-Ylsulfanylmethyl)-3h-Quinazoline-4-One"/>
</dbReference>
<dbReference type="DrugBank" id="DB04004">
    <property type="generic name" value="2,6-Diamino-8-(2-Dimethylaminoethylsulfanylmethyl)-3h-Quinazolin-4-One"/>
</dbReference>
<dbReference type="DrugBank" id="DB02599">
    <property type="generic name" value="2,6-Diamino-8-Propylsulfanylmethyl-3h-Quinazoline-4-One"/>
</dbReference>
<dbReference type="DrugBank" id="DB03505">
    <property type="generic name" value="2,6-diaminoquinazolin-4-ol"/>
</dbReference>
<dbReference type="DrugBank" id="DB04239">
    <property type="generic name" value="2-Amino-6-Aminomethyl-8-Phenylsulfanylmethyl-3h-Quinazolin-4-One"/>
</dbReference>
<dbReference type="DrugBank" id="DB01825">
    <property type="generic name" value="2-amino-8-methyl-4(1H)-quinazolinone"/>
</dbReference>
<dbReference type="DrugBank" id="DB03780">
    <property type="generic name" value="2-Aminoquinazolin-4(3h)-One"/>
</dbReference>
<dbReference type="DrugBank" id="DB02441">
    <property type="generic name" value="2-Butyl-5,6-Dihydro-1h-Imidazo[4,5-D]Pyridazine-4,7-Dione"/>
</dbReference>
<dbReference type="DrugBank" id="DB04169">
    <property type="generic name" value="3,5-Diaminophthalhydrazide"/>
</dbReference>
<dbReference type="DrugBank" id="DB08512">
    <property type="generic name" value="6-amino-2-[(1-naphthylmethyl)amino]-3,7-dihydro-8H-imidazo[4,5-g]quinazolin-8-one"/>
</dbReference>
<dbReference type="DrugBank" id="DB07564">
    <property type="generic name" value="6-amino-2-[(2-morpholin-4-ylethyl)amino]-3,7-dihydro-8H-imidazo[4,5-g]quinazolin-8-one"/>
</dbReference>
<dbReference type="DrugBank" id="DB08514">
    <property type="generic name" value="6-amino-2-[(thiophen-2-ylmethyl)amino]-1,7-dihydro-8H-imidazo[4,5-g]quinazolin-8-one"/>
</dbReference>
<dbReference type="DrugBank" id="DB08511">
    <property type="generic name" value="6-amino-2-methyl-1,7-dihydro-8H-imidazo[4,5-g]quinazolin-8-one"/>
</dbReference>
<dbReference type="DrugBank" id="DB07012">
    <property type="generic name" value="6-AMINO-3,7-DIHYDRO-IMIDAZO[4,5-G]QUINAZOLIN-8-ONE"/>
</dbReference>
<dbReference type="DrugBank" id="DB08267">
    <property type="generic name" value="6-amino-4-(2-phenylethyl)-1,7-dihydro-8H-imidazo[4,5-g]quinazolin-8-one"/>
</dbReference>
<dbReference type="DrugBank" id="DB07704">
    <property type="generic name" value="6-AMINO-4-[2-(4-METHOXYPHENYL)ETHYL]-1,7-DIHYDRO-8H-IMIDAZO[4,5-G]QUINAZOLIN-8-ONE"/>
</dbReference>
<dbReference type="DrugBank" id="DB08268">
    <property type="generic name" value="6-AMINO-4-[2-(4-METHYLPHENYL)ETHYL]-1,7-DIHYDRO-8H-IMIDAZO[4,5-G]QUINAZOLIN-8-ONE"/>
</dbReference>
<dbReference type="DrugBank" id="DB03074">
    <property type="generic name" value="7-cyano-7-deazaguanine"/>
</dbReference>
<dbReference type="DrugBank" id="DB03304">
    <property type="generic name" value="7-Deaza-7-Aminomethyl-Guanine"/>
</dbReference>
<dbReference type="DrugBank" id="DB02041">
    <property type="generic name" value="Isoluminol"/>
</dbReference>
<dbReference type="DrugBank" id="DB14732">
    <property type="generic name" value="Queuine"/>
</dbReference>
<dbReference type="DrugBank" id="DB07481">
    <property type="generic name" value="tert-butyl [(2-amino-4-oxo-4,7-dihydro-3H-pyrrolo[2,3-d]pyrimidin-5-yl)methyl]carbamate"/>
</dbReference>
<dbReference type="GeneID" id="79904432"/>
<dbReference type="KEGG" id="zmo:ZMO0363"/>
<dbReference type="eggNOG" id="COG0343">
    <property type="taxonomic scope" value="Bacteria"/>
</dbReference>
<dbReference type="HOGENOM" id="CLU_022060_0_1_5"/>
<dbReference type="BRENDA" id="2.4.2.29">
    <property type="organism ID" value="6765"/>
</dbReference>
<dbReference type="BRENDA" id="2.4.2.64">
    <property type="organism ID" value="6765"/>
</dbReference>
<dbReference type="UniPathway" id="UPA00392"/>
<dbReference type="EvolutionaryTrace" id="P28720"/>
<dbReference type="PRO" id="PR:P28720"/>
<dbReference type="Proteomes" id="UP000001173">
    <property type="component" value="Chromosome"/>
</dbReference>
<dbReference type="GO" id="GO:0005829">
    <property type="term" value="C:cytosol"/>
    <property type="evidence" value="ECO:0007669"/>
    <property type="project" value="TreeGrafter"/>
</dbReference>
<dbReference type="GO" id="GO:0046872">
    <property type="term" value="F:metal ion binding"/>
    <property type="evidence" value="ECO:0007669"/>
    <property type="project" value="UniProtKB-KW"/>
</dbReference>
<dbReference type="GO" id="GO:0008479">
    <property type="term" value="F:tRNA-guanosine(34) queuine transglycosylase activity"/>
    <property type="evidence" value="ECO:0007669"/>
    <property type="project" value="UniProtKB-UniRule"/>
</dbReference>
<dbReference type="GO" id="GO:0008616">
    <property type="term" value="P:queuosine biosynthetic process"/>
    <property type="evidence" value="ECO:0007669"/>
    <property type="project" value="UniProtKB-UniRule"/>
</dbReference>
<dbReference type="GO" id="GO:0002099">
    <property type="term" value="P:tRNA wobble guanine modification"/>
    <property type="evidence" value="ECO:0007669"/>
    <property type="project" value="TreeGrafter"/>
</dbReference>
<dbReference type="GO" id="GO:0101030">
    <property type="term" value="P:tRNA-guanine transglycosylation"/>
    <property type="evidence" value="ECO:0007669"/>
    <property type="project" value="InterPro"/>
</dbReference>
<dbReference type="FunFam" id="3.20.20.105:FF:000001">
    <property type="entry name" value="Queuine tRNA-ribosyltransferase"/>
    <property type="match status" value="1"/>
</dbReference>
<dbReference type="Gene3D" id="3.20.20.105">
    <property type="entry name" value="Queuine tRNA-ribosyltransferase-like"/>
    <property type="match status" value="1"/>
</dbReference>
<dbReference type="HAMAP" id="MF_00168">
    <property type="entry name" value="Q_tRNA_Tgt"/>
    <property type="match status" value="1"/>
</dbReference>
<dbReference type="InterPro" id="IPR050076">
    <property type="entry name" value="ArchSynthase1/Queuine_TRR"/>
</dbReference>
<dbReference type="InterPro" id="IPR004803">
    <property type="entry name" value="TGT"/>
</dbReference>
<dbReference type="InterPro" id="IPR036511">
    <property type="entry name" value="TGT-like_sf"/>
</dbReference>
<dbReference type="InterPro" id="IPR002616">
    <property type="entry name" value="tRNA_ribo_trans-like"/>
</dbReference>
<dbReference type="NCBIfam" id="TIGR00430">
    <property type="entry name" value="Q_tRNA_tgt"/>
    <property type="match status" value="1"/>
</dbReference>
<dbReference type="NCBIfam" id="TIGR00449">
    <property type="entry name" value="tgt_general"/>
    <property type="match status" value="1"/>
</dbReference>
<dbReference type="PANTHER" id="PTHR46499">
    <property type="entry name" value="QUEUINE TRNA-RIBOSYLTRANSFERASE"/>
    <property type="match status" value="1"/>
</dbReference>
<dbReference type="PANTHER" id="PTHR46499:SF1">
    <property type="entry name" value="QUEUINE TRNA-RIBOSYLTRANSFERASE"/>
    <property type="match status" value="1"/>
</dbReference>
<dbReference type="Pfam" id="PF01702">
    <property type="entry name" value="TGT"/>
    <property type="match status" value="1"/>
</dbReference>
<dbReference type="SUPFAM" id="SSF51713">
    <property type="entry name" value="tRNA-guanine transglycosylase"/>
    <property type="match status" value="1"/>
</dbReference>
<protein>
    <recommendedName>
        <fullName evidence="1">Queuine tRNA-ribosyltransferase</fullName>
        <ecNumber evidence="1">2.4.2.29</ecNumber>
    </recommendedName>
    <alternativeName>
        <fullName evidence="1">Guanine insertion enzyme</fullName>
    </alternativeName>
    <alternativeName>
        <fullName evidence="1">tRNA-guanine transglycosylase</fullName>
    </alternativeName>
</protein>
<evidence type="ECO:0000255" key="1">
    <source>
        <dbReference type="HAMAP-Rule" id="MF_00168"/>
    </source>
</evidence>
<evidence type="ECO:0000269" key="2">
    <source>
    </source>
</evidence>
<evidence type="ECO:0000269" key="3">
    <source>
    </source>
</evidence>
<evidence type="ECO:0000269" key="4">
    <source>
    </source>
</evidence>
<evidence type="ECO:0000269" key="5">
    <source>
    </source>
</evidence>
<evidence type="ECO:0000269" key="6">
    <source>
    </source>
</evidence>
<evidence type="ECO:0000269" key="7">
    <source>
    </source>
</evidence>
<evidence type="ECO:0000269" key="8">
    <source>
    </source>
</evidence>
<evidence type="ECO:0000269" key="9">
    <source>
    </source>
</evidence>
<evidence type="ECO:0000269" key="10">
    <source>
    </source>
</evidence>
<evidence type="ECO:0000269" key="11">
    <source>
    </source>
</evidence>
<evidence type="ECO:0000269" key="12">
    <source>
    </source>
</evidence>
<evidence type="ECO:0000305" key="13"/>
<evidence type="ECO:0000305" key="14">
    <source>
    </source>
</evidence>
<evidence type="ECO:0000305" key="15">
    <source>
    </source>
</evidence>
<evidence type="ECO:0007829" key="16">
    <source>
        <dbReference type="PDB" id="1EFZ"/>
    </source>
</evidence>
<evidence type="ECO:0007829" key="17">
    <source>
        <dbReference type="PDB" id="1P0E"/>
    </source>
</evidence>
<evidence type="ECO:0007829" key="18">
    <source>
        <dbReference type="PDB" id="2POT"/>
    </source>
</evidence>
<evidence type="ECO:0007829" key="19">
    <source>
        <dbReference type="PDB" id="4Q8W"/>
    </source>
</evidence>
<evidence type="ECO:0007829" key="20">
    <source>
        <dbReference type="PDB" id="5I03"/>
    </source>
</evidence>
<evidence type="ECO:0007829" key="21">
    <source>
        <dbReference type="PDB" id="5LPS"/>
    </source>
</evidence>
<evidence type="ECO:0007829" key="22">
    <source>
        <dbReference type="PDB" id="5N6F"/>
    </source>
</evidence>
<evidence type="ECO:0007829" key="23">
    <source>
        <dbReference type="PDB" id="6YGW"/>
    </source>
</evidence>
<evidence type="ECO:0007829" key="24">
    <source>
        <dbReference type="PDB" id="6YYZ"/>
    </source>
</evidence>
<evidence type="ECO:0007829" key="25">
    <source>
        <dbReference type="PDB" id="7A4K"/>
    </source>
</evidence>
<accession>P28720</accession>
<accession>Q5NQL7</accession>
<accession>Q60247</accession>
<accession>Q9F5L7</accession>
<organism>
    <name type="scientific">Zymomonas mobilis subsp. mobilis (strain ATCC 31821 / ZM4 / CP4)</name>
    <dbReference type="NCBI Taxonomy" id="264203"/>
    <lineage>
        <taxon>Bacteria</taxon>
        <taxon>Pseudomonadati</taxon>
        <taxon>Pseudomonadota</taxon>
        <taxon>Alphaproteobacteria</taxon>
        <taxon>Sphingomonadales</taxon>
        <taxon>Zymomonadaceae</taxon>
        <taxon>Zymomonas</taxon>
    </lineage>
</organism>
<reference key="1">
    <citation type="journal article" date="1995" name="J. Bacteriol.">
        <title>Sequence analysis and overexpression of the Zymomonas mobilis tgt gene encoding tRNA-guanine transglycosylase: purification and biochemical characterization of the enzyme.</title>
        <authorList>
            <person name="Reuter K.K.H."/>
            <person name="Ficner R."/>
        </authorList>
    </citation>
    <scope>NUCLEOTIDE SEQUENCE [GENOMIC DNA]</scope>
    <scope>PROTEIN SEQUENCE OF 2-7</scope>
    <scope>FUNCTION</scope>
    <scope>CATALYTIC ACTIVITY</scope>
    <scope>PATHWAY</scope>
    <scope>BIOPHYSICOCHEMICAL PROPERTIES</scope>
</reference>
<reference key="2">
    <citation type="submission" date="2000-10" db="EMBL/GenBank/DDBJ databases">
        <title>Sequence analysis of 44B6 fosmid clone of Zymomonas mobilis ZM4.</title>
        <authorList>
            <person name="Ahn J.Y."/>
            <person name="Kang H.S."/>
        </authorList>
    </citation>
    <scope>NUCLEOTIDE SEQUENCE [GENOMIC DNA]</scope>
    <source>
        <strain>ATCC 31821 / ZM4 / CP4</strain>
    </source>
</reference>
<reference key="3">
    <citation type="journal article" date="2005" name="Nat. Biotechnol.">
        <title>The genome sequence of the ethanologenic bacterium Zymomonas mobilis ZM4.</title>
        <authorList>
            <person name="Seo J.-S."/>
            <person name="Chong H."/>
            <person name="Park H.S."/>
            <person name="Yoon K.-O."/>
            <person name="Jung C."/>
            <person name="Kim J.J."/>
            <person name="Hong J.H."/>
            <person name="Kim H."/>
            <person name="Kim J.-H."/>
            <person name="Kil J.-I."/>
            <person name="Park C.J."/>
            <person name="Oh H.-M."/>
            <person name="Lee J.-S."/>
            <person name="Jin S.-J."/>
            <person name="Um H.-W."/>
            <person name="Lee H.-J."/>
            <person name="Oh S.-J."/>
            <person name="Kim J.Y."/>
            <person name="Kang H.L."/>
            <person name="Lee S.Y."/>
            <person name="Lee K.J."/>
            <person name="Kang H.S."/>
        </authorList>
    </citation>
    <scope>NUCLEOTIDE SEQUENCE [LARGE SCALE GENOMIC DNA]</scope>
    <source>
        <strain>ATCC 31821 / ZM4 / CP4</strain>
    </source>
</reference>
<reference key="4">
    <citation type="journal article" date="1992" name="FEMS Microbiol. Lett.">
        <title>Cloning and molecular characterization of the DNA ligase gene (lig) from Zymomonas mobilis.</title>
        <authorList>
            <person name="Shark K.B."/>
            <person name="Conway T."/>
        </authorList>
    </citation>
    <scope>PARTIAL NUCLEOTIDE SEQUENCE [GENOMIC DNA]</scope>
    <source>
        <strain>ATCC 31821 / ZM4 / CP4</strain>
    </source>
</reference>
<reference key="5">
    <citation type="journal article" date="1996" name="Biochemistry">
        <title>Mutagenesis and crystallographic studies of Zymomonas mobilis tRNA-guanine transglycosylase reveal aspartate 102 as the active site nucleophile.</title>
        <authorList>
            <person name="Romier C."/>
            <person name="Reuter K."/>
            <person name="Suck D."/>
            <person name="Ficner R."/>
        </authorList>
    </citation>
    <scope>X-RAY CRYSTALLOGRAPHY (2.20 ANGSTROMS) OF 1-386 IN COMPLEX WITH ZINC</scope>
    <scope>MUTAGENESIS OF ASP-156</scope>
</reference>
<reference key="6">
    <citation type="journal article" date="1996" name="EMBO J.">
        <title>Crystal structure of tRNA-guanine transglycosylase: RNA modification by base exchange.</title>
        <authorList>
            <person name="Romier C."/>
            <person name="Reuter K."/>
            <person name="Suck D."/>
            <person name="Ficner R."/>
        </authorList>
    </citation>
    <scope>X-RAY CRYSTALLOGRAPHY (1.85 ANGSTROMS) IN COMPLEX WITH ZINC</scope>
</reference>
<reference key="7">
    <citation type="journal article" date="1999" name="FEBS Lett.">
        <title>Mutagenesis and crystallographic studies of Zymomonas mobilis tRNA-guanine transglycosylase to elucidate the role of serine 103 for enzymatic activity.</title>
        <authorList>
            <person name="Graedler U."/>
            <person name="Ficner R."/>
            <person name="Garcia G.A."/>
            <person name="Stubbs M.T."/>
            <person name="Klebe G."/>
            <person name="Reuter K."/>
        </authorList>
    </citation>
    <scope>X-RAY CRYSTALLOGRAPHY (2.0 ANGSTROMS) OF 11-382 IN COMPLEX WITH ZINC</scope>
    <scope>MUTAGENESIS OF SER-103</scope>
</reference>
<reference key="8">
    <citation type="journal article" date="2001" name="J. Mol. Biol.">
        <title>A new target for shigellosis: rational design and crystallographic studies of inhibitors of tRNA-guanine transglycosylase.</title>
        <authorList>
            <person name="Graedler U."/>
            <person name="Gerber H.-D."/>
            <person name="Goodenough-Lashua D.M."/>
            <person name="Garcia G.A."/>
            <person name="Ficner R."/>
            <person name="Reuter K."/>
            <person name="Stubbs M.T."/>
            <person name="Klebe G."/>
        </authorList>
    </citation>
    <scope>X-RAY CRYSTALLOGRAPHY (1.95 ANGSTROMS) IN COMPLEX WITH ZINC</scope>
</reference>
<reference key="9">
    <citation type="journal article" date="2002" name="ChemBioChem">
        <title>De novo design, synthesis, and in vitro evaluation of inhibitors for prokaryotic tRNA-guanine transglycosylase: a dramatic sulfur effect on binding affinity.</title>
        <authorList>
            <person name="Meyer E.A."/>
            <person name="Brenk R."/>
            <person name="Castellano R.K."/>
            <person name="Furler M."/>
            <person name="Klebe G."/>
            <person name="Diederich F."/>
        </authorList>
    </citation>
    <scope>X-RAY CRYSTALLOGRAPHY (1.8 ANGSTROMS) OF 12-386 IN COMPLEX WITH ZINC</scope>
</reference>
<reference key="10">
    <citation type="journal article" date="2003" name="J. Biol. Chem.">
        <title>An essential role for aspartate 264 in catalysis by tRNA-guanine transglycosylase from Escherichia coli.</title>
        <authorList>
            <person name="Kittendorf J.D."/>
            <person name="Sgraja T."/>
            <person name="Reuter K."/>
            <person name="Klebe G."/>
            <person name="Garcia G.A."/>
        </authorList>
    </citation>
    <scope>X-RAY CRYSTALLOGRAPHY (1.70 ANGSTROMS) OF 2-383 OF MUTANT E-280 IN COMPLEX WITH ZINC</scope>
</reference>
<reference key="11">
    <citation type="journal article" date="2003" name="ChemBioChem">
        <title>Flexible adaptations in the structure of the tRNA-modifying enzyme tRNA-guanine transglycosylase and their implications for substrate selectivity, reaction mechanism and structure-based drug design.</title>
        <authorList>
            <person name="Brenk R."/>
            <person name="Stubbs M.T."/>
            <person name="Heine A."/>
            <person name="Reuter K."/>
            <person name="Klebe G."/>
        </authorList>
    </citation>
    <scope>X-RAY CRYSTALLOGRAPHY (1.70 ANGSTROMS) IN COMPLEX WITH ZINC</scope>
</reference>
<reference key="12">
    <citation type="journal article" date="2003" name="J. Med. Chem.">
        <title>Virtual screening for submicromolar leads of tRNA-guanine transglycosylase based on a new unexpected binding mode detected by crystal structure analysis.</title>
        <authorList>
            <person name="Brenk R."/>
            <person name="Naerum L."/>
            <person name="Graedler U."/>
            <person name="Gerber H.-D."/>
            <person name="Garcia G.A."/>
            <person name="Reuter K."/>
            <person name="Stubbs M.T."/>
            <person name="Klebe G."/>
        </authorList>
    </citation>
    <scope>X-RAY CRYSTALLOGRAPHY (2.1 ANGSTROMS) OF 12-386 IN COMPLEX WITH ZINC</scope>
</reference>
<reference key="13">
    <citation type="journal article" date="2003" name="Nat. Struct. Biol.">
        <title>Chemical trapping and crystal structure of a catalytic tRNA guanine transglycosylase covalent intermediate.</title>
        <authorList>
            <person name="Xie W."/>
            <person name="Liu X."/>
            <person name="Huang R.H."/>
        </authorList>
    </citation>
    <scope>X-RAY CRYSTALLOGRAPHY (2.90 ANGSTROMS) OF 1-386 IN COMPLEX WITH 9-DEAZAGUANINE AND ZINC</scope>
    <scope>SUBUNIT</scope>
    <scope>MUTAGENESIS OF ASP-280</scope>
</reference>
<reference key="14">
    <citation type="journal article" date="2009" name="J. Mol. Biol.">
        <title>An integrative approach combining noncovalent mass spectrometry, enzyme kinetics and X-ray crystallography to decipher Tgt protein-protein and protein-RNA interaction.</title>
        <authorList>
            <person name="Ritschel T."/>
            <person name="Atmanene C."/>
            <person name="Reuter K."/>
            <person name="Van Dorsselaer A."/>
            <person name="Sanglier-Cianferani S."/>
            <person name="Klebe G."/>
        </authorList>
    </citation>
    <scope>X-RAY CRYSTALLOGRAPHY (2.00 ANGSTROMS) OF 1-386 IN COMPLEX WITH ZINC</scope>
    <scope>SUBUNIT</scope>
</reference>
<feature type="initiator methionine" description="Removed" evidence="10">
    <location>
        <position position="1"/>
    </location>
</feature>
<feature type="chain" id="PRO_0000135563" description="Queuine tRNA-ribosyltransferase">
    <location>
        <begin position="2"/>
        <end position="386"/>
    </location>
</feature>
<feature type="region of interest" description="RNA binding" evidence="1 7">
    <location>
        <begin position="261"/>
        <end position="267"/>
    </location>
</feature>
<feature type="region of interest" description="RNA binding; important for wobble base 34 recognition" evidence="1 7">
    <location>
        <begin position="285"/>
        <end position="289"/>
    </location>
</feature>
<feature type="active site" description="Proton acceptor" evidence="1 14">
    <location>
        <position position="102"/>
    </location>
</feature>
<feature type="active site" description="Nucleophile" evidence="1 14">
    <location>
        <position position="280"/>
    </location>
</feature>
<feature type="binding site" evidence="1 7">
    <location>
        <begin position="102"/>
        <end position="106"/>
    </location>
    <ligand>
        <name>substrate</name>
    </ligand>
</feature>
<feature type="binding site" evidence="1 7">
    <location>
        <position position="156"/>
    </location>
    <ligand>
        <name>substrate</name>
    </ligand>
</feature>
<feature type="binding site" evidence="1 7">
    <location>
        <position position="203"/>
    </location>
    <ligand>
        <name>substrate</name>
    </ligand>
</feature>
<feature type="binding site" evidence="1 7">
    <location>
        <position position="230"/>
    </location>
    <ligand>
        <name>substrate</name>
    </ligand>
</feature>
<feature type="binding site" evidence="1 2 3 4 5 6 7 8 9 11 12">
    <location>
        <position position="318"/>
    </location>
    <ligand>
        <name>Zn(2+)</name>
        <dbReference type="ChEBI" id="CHEBI:29105"/>
    </ligand>
</feature>
<feature type="binding site" evidence="1 2 3 4 5 6 7 8 9 11 12">
    <location>
        <position position="320"/>
    </location>
    <ligand>
        <name>Zn(2+)</name>
        <dbReference type="ChEBI" id="CHEBI:29105"/>
    </ligand>
</feature>
<feature type="binding site" evidence="1 2 3 4 5 6 7 8 9 11 12">
    <location>
        <position position="323"/>
    </location>
    <ligand>
        <name>Zn(2+)</name>
        <dbReference type="ChEBI" id="CHEBI:29105"/>
    </ligand>
</feature>
<feature type="binding site" evidence="1 2 3 4 5 6 7 8 9 11 12">
    <location>
        <position position="349"/>
    </location>
    <ligand>
        <name>Zn(2+)</name>
        <dbReference type="ChEBI" id="CHEBI:29105"/>
    </ligand>
</feature>
<feature type="mutagenesis site" description="Strongly reduces activity." evidence="2">
    <original>S</original>
    <variation>A</variation>
    <location>
        <position position="103"/>
    </location>
</feature>
<feature type="mutagenesis site" description="Abolishes catalytic activity." evidence="12">
    <original>D</original>
    <variation>A</variation>
    <location>
        <position position="156"/>
    </location>
</feature>
<feature type="mutagenesis site" description="Abolishes catalytic activity." evidence="7">
    <original>D</original>
    <variation>N</variation>
    <location>
        <position position="280"/>
    </location>
</feature>
<feature type="sequence conflict" description="In Ref. 1 and 2." evidence="13" ref="1 2">
    <original>T</original>
    <variation>K</variation>
    <location>
        <position position="312"/>
    </location>
</feature>
<feature type="helix" evidence="25">
    <location>
        <begin position="6"/>
        <end position="8"/>
    </location>
</feature>
<feature type="strand" evidence="22">
    <location>
        <begin position="13"/>
        <end position="22"/>
    </location>
</feature>
<feature type="strand" evidence="22">
    <location>
        <begin position="25"/>
        <end position="32"/>
    </location>
</feature>
<feature type="strand" evidence="22">
    <location>
        <begin position="35"/>
        <end position="43"/>
    </location>
</feature>
<feature type="strand" evidence="23">
    <location>
        <begin position="45"/>
        <end position="50"/>
    </location>
</feature>
<feature type="helix" evidence="22">
    <location>
        <begin position="56"/>
        <end position="61"/>
    </location>
</feature>
<feature type="strand" evidence="20">
    <location>
        <begin position="63"/>
        <end position="65"/>
    </location>
</feature>
<feature type="strand" evidence="22">
    <location>
        <begin position="67"/>
        <end position="70"/>
    </location>
</feature>
<feature type="helix" evidence="22">
    <location>
        <begin position="71"/>
        <end position="76"/>
    </location>
</feature>
<feature type="turn" evidence="18">
    <location>
        <begin position="77"/>
        <end position="79"/>
    </location>
</feature>
<feature type="helix" evidence="22">
    <location>
        <begin position="80"/>
        <end position="85"/>
    </location>
</feature>
<feature type="helix" evidence="22">
    <location>
        <begin position="89"/>
        <end position="93"/>
    </location>
</feature>
<feature type="strand" evidence="22">
    <location>
        <begin position="99"/>
        <end position="102"/>
    </location>
</feature>
<feature type="helix" evidence="22">
    <location>
        <begin position="105"/>
        <end position="108"/>
    </location>
</feature>
<feature type="turn" evidence="16">
    <location>
        <begin position="109"/>
        <end position="111"/>
    </location>
</feature>
<feature type="strand" evidence="23">
    <location>
        <begin position="113"/>
        <end position="118"/>
    </location>
</feature>
<feature type="strand" evidence="22">
    <location>
        <begin position="122"/>
        <end position="125"/>
    </location>
</feature>
<feature type="turn" evidence="24">
    <location>
        <begin position="127"/>
        <end position="129"/>
    </location>
</feature>
<feature type="strand" evidence="22">
    <location>
        <begin position="132"/>
        <end position="135"/>
    </location>
</feature>
<feature type="helix" evidence="22">
    <location>
        <begin position="137"/>
        <end position="147"/>
    </location>
</feature>
<feature type="strand" evidence="22">
    <location>
        <begin position="150"/>
        <end position="153"/>
    </location>
</feature>
<feature type="helix" evidence="22">
    <location>
        <begin position="165"/>
        <end position="188"/>
    </location>
</feature>
<feature type="helix" evidence="22">
    <location>
        <begin position="190"/>
        <end position="195"/>
    </location>
</feature>
<feature type="strand" evidence="22">
    <location>
        <begin position="197"/>
        <end position="202"/>
    </location>
</feature>
<feature type="helix" evidence="22">
    <location>
        <begin position="208"/>
        <end position="221"/>
    </location>
</feature>
<feature type="strand" evidence="22">
    <location>
        <begin position="224"/>
        <end position="228"/>
    </location>
</feature>
<feature type="strand" evidence="19">
    <location>
        <begin position="232"/>
        <end position="234"/>
    </location>
</feature>
<feature type="helix" evidence="22">
    <location>
        <begin position="237"/>
        <end position="247"/>
    </location>
</feature>
<feature type="helix" evidence="22">
    <location>
        <begin position="248"/>
        <end position="250"/>
    </location>
</feature>
<feature type="strand" evidence="17">
    <location>
        <begin position="253"/>
        <end position="255"/>
    </location>
</feature>
<feature type="strand" evidence="22">
    <location>
        <begin position="257"/>
        <end position="259"/>
    </location>
</feature>
<feature type="helix" evidence="22">
    <location>
        <begin position="265"/>
        <end position="272"/>
    </location>
</feature>
<feature type="turn" evidence="22">
    <location>
        <begin position="273"/>
        <end position="275"/>
    </location>
</feature>
<feature type="strand" evidence="22">
    <location>
        <begin position="278"/>
        <end position="280"/>
    </location>
</feature>
<feature type="helix" evidence="22">
    <location>
        <begin position="283"/>
        <end position="290"/>
    </location>
</feature>
<feature type="strand" evidence="21">
    <location>
        <begin position="292"/>
        <end position="295"/>
    </location>
</feature>
<feature type="strand" evidence="21">
    <location>
        <begin position="298"/>
        <end position="301"/>
    </location>
</feature>
<feature type="helix" evidence="22">
    <location>
        <begin position="305"/>
        <end position="307"/>
    </location>
</feature>
<feature type="strand" evidence="19">
    <location>
        <begin position="314"/>
        <end position="317"/>
    </location>
</feature>
<feature type="helix" evidence="22">
    <location>
        <begin position="321"/>
        <end position="325"/>
    </location>
</feature>
<feature type="helix" evidence="22">
    <location>
        <begin position="328"/>
        <end position="336"/>
    </location>
</feature>
<feature type="helix" evidence="22">
    <location>
        <begin position="340"/>
        <end position="366"/>
    </location>
</feature>
<feature type="helix" evidence="22">
    <location>
        <begin position="370"/>
        <end position="383"/>
    </location>
</feature>
<gene>
    <name evidence="1" type="primary">tgt</name>
    <name type="ordered locus">ZMO0363</name>
</gene>
<keyword id="KW-0002">3D-structure</keyword>
<keyword id="KW-0903">Direct protein sequencing</keyword>
<keyword id="KW-0328">Glycosyltransferase</keyword>
<keyword id="KW-0479">Metal-binding</keyword>
<keyword id="KW-0671">Queuosine biosynthesis</keyword>
<keyword id="KW-1185">Reference proteome</keyword>
<keyword id="KW-0808">Transferase</keyword>
<keyword id="KW-0819">tRNA processing</keyword>
<keyword id="KW-0862">Zinc</keyword>
<proteinExistence type="evidence at protein level"/>